<proteinExistence type="inferred from homology"/>
<accession>P0CH60</accession>
<accession>D4D4Y0</accession>
<keyword id="KW-0031">Aminopeptidase</keyword>
<keyword id="KW-1015">Disulfide bond</keyword>
<keyword id="KW-0325">Glycoprotein</keyword>
<keyword id="KW-0378">Hydrolase</keyword>
<keyword id="KW-0479">Metal-binding</keyword>
<keyword id="KW-0645">Protease</keyword>
<keyword id="KW-0964">Secreted</keyword>
<keyword id="KW-0732">Signal</keyword>
<keyword id="KW-0843">Virulence</keyword>
<keyword id="KW-0862">Zinc</keyword>
<organism>
    <name type="scientific">Trichophyton verrucosum (strain HKI 0517)</name>
    <dbReference type="NCBI Taxonomy" id="663202"/>
    <lineage>
        <taxon>Eukaryota</taxon>
        <taxon>Fungi</taxon>
        <taxon>Dikarya</taxon>
        <taxon>Ascomycota</taxon>
        <taxon>Pezizomycotina</taxon>
        <taxon>Eurotiomycetes</taxon>
        <taxon>Eurotiomycetidae</taxon>
        <taxon>Onygenales</taxon>
        <taxon>Arthrodermataceae</taxon>
        <taxon>Trichophyton</taxon>
    </lineage>
</organism>
<gene>
    <name type="ORF">TRV_02148.1</name>
</gene>
<protein>
    <recommendedName>
        <fullName>Probable leucine aminopeptidase TRV_02148.1</fullName>
        <ecNumber>3.4.11.-</ecNumber>
    </recommendedName>
    <alternativeName>
        <fullName>Leucyl aminopeptidase TRV_02148.1</fullName>
    </alternativeName>
</protein>
<reference key="1">
    <citation type="journal article" date="2011" name="Genome Biol.">
        <title>Comparative and functional genomics provide insights into the pathogenicity of dermatophytic fungi.</title>
        <authorList>
            <person name="Burmester A."/>
            <person name="Shelest E."/>
            <person name="Gloeckner G."/>
            <person name="Heddergott C."/>
            <person name="Schindler S."/>
            <person name="Staib P."/>
            <person name="Heidel A."/>
            <person name="Felder M."/>
            <person name="Petzold A."/>
            <person name="Szafranski K."/>
            <person name="Feuermann M."/>
            <person name="Pedruzzi I."/>
            <person name="Priebe S."/>
            <person name="Groth M."/>
            <person name="Winkler R."/>
            <person name="Li W."/>
            <person name="Kniemeyer O."/>
            <person name="Schroeckh V."/>
            <person name="Hertweck C."/>
            <person name="Hube B."/>
            <person name="White T.C."/>
            <person name="Platzer M."/>
            <person name="Guthke R."/>
            <person name="Heitman J."/>
            <person name="Woestemeyer J."/>
            <person name="Zipfel P.F."/>
            <person name="Monod M."/>
            <person name="Brakhage A.A."/>
        </authorList>
    </citation>
    <scope>NUCLEOTIDE SEQUENCE [LARGE SCALE GENOMIC DNA]</scope>
    <source>
        <strain>HKI 0517</strain>
    </source>
</reference>
<sequence length="357" mass="38516">MKVLAALALSALAMAKPTPPMPGMSLVQTGPQETRWVTAKEKHDMVMNHIGFFDITNRPESASIASKPKSYAFPGNVSHQAEVKPLLEKISADHIKSNLEMFSSYPNRYYDAQSGVESAQWVMEQAQAVVGNIQGAKVEMVKHDWMQPSIRAIIPGKSEKIVAVGAHQDSINGKNPQGEAPGADDNGSGSMTILEALTALVSDQKIAGGEAANTLEFHWYAGEEEGLLGSQDIFQQYSQEGKEVVAMLNQDMTGYGETMGVITDNSDPNLTKFTKMILDTYTSAKYSDSECGYACSDHASANKAGFPSAFVYEAVVGQDNPAIHSPDDTIEKLDPAKMAEHAKLVVGFAYELAFATL</sequence>
<comment type="function">
    <text evidence="1">Probable extracellular aminopeptidase which contributes to pathogenicity.</text>
</comment>
<comment type="cofactor">
    <cofactor evidence="1">
        <name>Zn(2+)</name>
        <dbReference type="ChEBI" id="CHEBI:29105"/>
    </cofactor>
    <text evidence="1">Binds 2 Zn(2+) ions per subunit.</text>
</comment>
<comment type="subunit">
    <text evidence="1">Monomer.</text>
</comment>
<comment type="subcellular location">
    <subcellularLocation>
        <location evidence="1">Secreted</location>
    </subcellularLocation>
</comment>
<comment type="similarity">
    <text evidence="4">Belongs to the peptidase M28 family. M28E subfamily.</text>
</comment>
<comment type="sequence caution" evidence="4">
    <conflict type="erroneous gene model prediction">
        <sequence resource="EMBL-CDS" id="EFE43096"/>
    </conflict>
    <text>The predicted gene TRV_02148 has been split into 2 genes: TRV_02148.1 and TRV_02148.2.</text>
</comment>
<evidence type="ECO:0000250" key="1"/>
<evidence type="ECO:0000255" key="2"/>
<evidence type="ECO:0000256" key="3">
    <source>
        <dbReference type="SAM" id="MobiDB-lite"/>
    </source>
</evidence>
<evidence type="ECO:0000305" key="4"/>
<feature type="signal peptide" evidence="2">
    <location>
        <begin position="1"/>
        <end position="15"/>
    </location>
</feature>
<feature type="chain" id="PRO_0000397776" description="Probable leucine aminopeptidase TRV_02148.1">
    <location>
        <begin position="16"/>
        <end position="357"/>
    </location>
</feature>
<feature type="region of interest" description="Disordered" evidence="3">
    <location>
        <begin position="169"/>
        <end position="188"/>
    </location>
</feature>
<feature type="binding site" evidence="1">
    <location>
        <position position="167"/>
    </location>
    <ligand>
        <name>Zn(2+)</name>
        <dbReference type="ChEBI" id="CHEBI:29105"/>
        <label>1</label>
    </ligand>
</feature>
<feature type="binding site" evidence="1">
    <location>
        <position position="185"/>
    </location>
    <ligand>
        <name>Zn(2+)</name>
        <dbReference type="ChEBI" id="CHEBI:29105"/>
        <label>1</label>
    </ligand>
</feature>
<feature type="binding site" evidence="1">
    <location>
        <position position="185"/>
    </location>
    <ligand>
        <name>Zn(2+)</name>
        <dbReference type="ChEBI" id="CHEBI:29105"/>
        <label>2</label>
        <note>catalytic</note>
    </ligand>
</feature>
<feature type="binding site" evidence="1">
    <location>
        <position position="224"/>
    </location>
    <ligand>
        <name>Zn(2+)</name>
        <dbReference type="ChEBI" id="CHEBI:29105"/>
        <label>2</label>
        <note>catalytic</note>
    </ligand>
</feature>
<feature type="binding site" evidence="1">
    <location>
        <position position="251"/>
    </location>
    <ligand>
        <name>Zn(2+)</name>
        <dbReference type="ChEBI" id="CHEBI:29105"/>
        <label>1</label>
    </ligand>
</feature>
<feature type="binding site" evidence="1">
    <location>
        <position position="324"/>
    </location>
    <ligand>
        <name>Zn(2+)</name>
        <dbReference type="ChEBI" id="CHEBI:29105"/>
        <label>2</label>
        <note>catalytic</note>
    </ligand>
</feature>
<feature type="glycosylation site" description="N-linked (GlcNAc...) asparagine" evidence="2">
    <location>
        <position position="76"/>
    </location>
</feature>
<feature type="glycosylation site" description="N-linked (GlcNAc...) asparagine" evidence="2">
    <location>
        <position position="186"/>
    </location>
</feature>
<feature type="glycosylation site" description="N-linked (GlcNAc...) asparagine" evidence="2">
    <location>
        <position position="269"/>
    </location>
</feature>
<feature type="disulfide bond" evidence="1">
    <location>
        <begin position="291"/>
        <end position="295"/>
    </location>
</feature>
<dbReference type="EC" id="3.4.11.-"/>
<dbReference type="EMBL" id="ACYE01000114">
    <property type="protein sequence ID" value="EFE43096.1"/>
    <property type="status" value="ALT_SEQ"/>
    <property type="molecule type" value="Genomic_DNA"/>
</dbReference>
<dbReference type="SMR" id="P0CH60"/>
<dbReference type="HOGENOM" id="CLU_366463_0_0_1"/>
<dbReference type="Proteomes" id="UP000008383">
    <property type="component" value="Unassembled WGS sequence"/>
</dbReference>
<dbReference type="GO" id="GO:0005576">
    <property type="term" value="C:extracellular region"/>
    <property type="evidence" value="ECO:0007669"/>
    <property type="project" value="UniProtKB-SubCell"/>
</dbReference>
<dbReference type="GO" id="GO:0004177">
    <property type="term" value="F:aminopeptidase activity"/>
    <property type="evidence" value="ECO:0007669"/>
    <property type="project" value="UniProtKB-KW"/>
</dbReference>
<dbReference type="GO" id="GO:0046872">
    <property type="term" value="F:metal ion binding"/>
    <property type="evidence" value="ECO:0007669"/>
    <property type="project" value="UniProtKB-KW"/>
</dbReference>
<dbReference type="GO" id="GO:0008235">
    <property type="term" value="F:metalloexopeptidase activity"/>
    <property type="evidence" value="ECO:0007669"/>
    <property type="project" value="InterPro"/>
</dbReference>
<dbReference type="GO" id="GO:0006508">
    <property type="term" value="P:proteolysis"/>
    <property type="evidence" value="ECO:0007669"/>
    <property type="project" value="UniProtKB-KW"/>
</dbReference>
<dbReference type="CDD" id="cd03879">
    <property type="entry name" value="M28_AAP"/>
    <property type="match status" value="1"/>
</dbReference>
<dbReference type="FunFam" id="3.40.630.10:FF:000042">
    <property type="entry name" value="Peptide hydrolase"/>
    <property type="match status" value="1"/>
</dbReference>
<dbReference type="Gene3D" id="3.40.630.10">
    <property type="entry name" value="Zn peptidases"/>
    <property type="match status" value="1"/>
</dbReference>
<dbReference type="InterPro" id="IPR045175">
    <property type="entry name" value="M28_fam"/>
</dbReference>
<dbReference type="InterPro" id="IPR007484">
    <property type="entry name" value="Peptidase_M28"/>
</dbReference>
<dbReference type="PANTHER" id="PTHR12147:SF56">
    <property type="entry name" value="AMINOPEPTIDASE YDR415C-RELATED"/>
    <property type="match status" value="1"/>
</dbReference>
<dbReference type="PANTHER" id="PTHR12147">
    <property type="entry name" value="METALLOPEPTIDASE M28 FAMILY MEMBER"/>
    <property type="match status" value="1"/>
</dbReference>
<dbReference type="Pfam" id="PF04389">
    <property type="entry name" value="Peptidase_M28"/>
    <property type="match status" value="1"/>
</dbReference>
<dbReference type="SUPFAM" id="SSF53187">
    <property type="entry name" value="Zn-dependent exopeptidases"/>
    <property type="match status" value="1"/>
</dbReference>
<name>LAP5_TRIVH</name>